<sequence>MSIRVGQKAPDFTATAVFDQEFGTIRLSDYLDKRYVVLFFYPLDFTFVCPTEITAFSDRFKEFKELSTEVLGVSVDSEFSHLAWTQIDRKSGGLGELEYPLVSDLKKEISSSYNVLTEDGVALRALFIIDKEGIIQHSTVNNLSFGRNVDEALRTLQAIQYSQENPDEVCPVNWKPGSKTMKPDPVGSKVYFEAI</sequence>
<reference evidence="9" key="1">
    <citation type="journal article" date="2018" name="Eur. J. Phycol.">
        <title>Gene structure and cDNA sequence of 2-Cys peroxiredoxin in the harmful algal bloom species Chattonella marina and its gene transcription under different light intensities.</title>
        <authorList>
            <person name="Mukai K."/>
            <person name="Teramoto A."/>
            <person name="Qiu X."/>
            <person name="Shimasaki Y."/>
            <person name="Kato-Unoki Y."/>
            <person name="Lee J.M."/>
            <person name="Mizoguchi N."/>
            <person name="Khanam M.R.M."/>
            <person name="Satone H."/>
            <person name="Tatsuke T."/>
            <person name="Kusakabe T."/>
            <person name="Oshima Y."/>
        </authorList>
    </citation>
    <scope>NUCLEOTIDE SEQUENCE [GENOMIC DNA]</scope>
    <scope>INDUCTION</scope>
    <source>
        <strain evidence="9">NIES-1</strain>
    </source>
</reference>
<reference evidence="8" key="2">
    <citation type="journal article" date="2013" name="Biosci. Biotechnol. Biochem.">
        <title>Growth-phase dependent variation in photosynthetic activity and cellular protein expression profile in the harmful raphidophyte Chattonella antiqua.</title>
        <authorList>
            <person name="Qiu X."/>
            <person name="Shimasaki Y."/>
            <person name="Tsuyama M."/>
            <person name="Yamada T."/>
            <person name="Kuwahara R."/>
            <person name="Kawaguchi M."/>
            <person name="Honda M."/>
            <person name="Gunjikake H."/>
            <person name="Tasmin R."/>
            <person name="Shimizu M."/>
            <person name="Sato Y."/>
            <person name="Kato-Unoki Y."/>
            <person name="Nakashima T."/>
            <person name="Matsubara T."/>
            <person name="Yamasaki Y."/>
            <person name="Ichinose H."/>
            <person name="Wariishi H."/>
            <person name="Honjo T."/>
            <person name="Oshima Y."/>
        </authorList>
    </citation>
    <scope>PROTEIN SEQUENCE OF 2-21</scope>
    <scope>INDUCTION</scope>
    <source>
        <strain evidence="6">NIES-1</strain>
    </source>
</reference>
<reference evidence="8" key="3">
    <citation type="journal article" date="2020" name="J. Exp. Mar. Biol. Ecol.">
        <title>Diurnal variations in expression of photosynthesis-related proteins in the harmful Raphidophyceae Chattonella marina var. antiqua.</title>
        <authorList>
            <person name="Qiu X."/>
            <person name="Mukai K."/>
            <person name="Shimasaki Y."/>
            <person name="Wu M."/>
            <person name="Chen C."/>
            <person name="Lu Y."/>
            <person name="Ichinose H."/>
            <person name="Nakashima T."/>
            <person name="Kato-Unoki Y."/>
            <person name="Oshima Y."/>
        </authorList>
    </citation>
    <scope>PROTEIN SEQUENCE OF 2-21</scope>
    <source>
        <strain evidence="7">NIES-1</strain>
    </source>
</reference>
<accession>A0A2Z5VKM8</accession>
<accession>C0HLQ9</accession>
<comment type="function">
    <text evidence="2">Thiol-specific peroxidase that catalyzes the reduction of hydrogen peroxide and organic hydroperoxides to water and alcohols, respectively. Plays a role in cell protection against oxidative stress by detoxifying peroxides.</text>
</comment>
<comment type="catalytic activity">
    <reaction evidence="2">
        <text>a hydroperoxide + [thioredoxin]-dithiol = an alcohol + [thioredoxin]-disulfide + H2O</text>
        <dbReference type="Rhea" id="RHEA:62620"/>
        <dbReference type="Rhea" id="RHEA-COMP:10698"/>
        <dbReference type="Rhea" id="RHEA-COMP:10700"/>
        <dbReference type="ChEBI" id="CHEBI:15377"/>
        <dbReference type="ChEBI" id="CHEBI:29950"/>
        <dbReference type="ChEBI" id="CHEBI:30879"/>
        <dbReference type="ChEBI" id="CHEBI:35924"/>
        <dbReference type="ChEBI" id="CHEBI:50058"/>
        <dbReference type="EC" id="1.11.1.24"/>
    </reaction>
</comment>
<comment type="subunit">
    <text evidence="1">Homodimer; disulfide-linked, upon oxidation.</text>
</comment>
<comment type="subcellular location">
    <subcellularLocation>
        <location evidence="2">Plastid</location>
        <location evidence="2">Chloroplast</location>
    </subcellularLocation>
</comment>
<comment type="induction">
    <text evidence="4 5">Up-regulated by high-intensity light and H2O2 (Ref.1). Down-regulated in the late stationary growth phase as compared to the early stationary and exponential growth phases (PubMed:23291769).</text>
</comment>
<comment type="similarity">
    <text evidence="8">Belongs to the peroxiredoxin family. AhpC/Prx1 subfamily.</text>
</comment>
<organism>
    <name type="scientific">Chattonella marina var. antiqua</name>
    <name type="common">Red tide flagellate</name>
    <name type="synonym">Chattonella antiqua</name>
    <dbReference type="NCBI Taxonomy" id="859642"/>
    <lineage>
        <taxon>Eukaryota</taxon>
        <taxon>Sar</taxon>
        <taxon>Stramenopiles</taxon>
        <taxon>Ochrophyta</taxon>
        <taxon>Raphidophyceae</taxon>
        <taxon>Chattonellales</taxon>
        <taxon>Chattonellaceae</taxon>
        <taxon>Chattonella</taxon>
    </lineage>
</organism>
<keyword id="KW-0150">Chloroplast</keyword>
<keyword id="KW-0903">Direct protein sequencing</keyword>
<keyword id="KW-1015">Disulfide bond</keyword>
<keyword id="KW-0560">Oxidoreductase</keyword>
<keyword id="KW-0934">Plastid</keyword>
<name>PRDX_CHAMQ</name>
<protein>
    <recommendedName>
        <fullName evidence="8">2-cysteine peroxiredoxin, chloroplastic</fullName>
        <shortName evidence="8">2-Cys Prx</shortName>
        <ecNumber evidence="2">1.11.1.24</ecNumber>
    </recommendedName>
    <alternativeName>
        <fullName evidence="8">Thiol-specific antioxidant protein</fullName>
    </alternativeName>
    <alternativeName>
        <fullName evidence="8">Thioredoxin-dependent peroxiredoxin</fullName>
    </alternativeName>
</protein>
<evidence type="ECO:0000250" key="1">
    <source>
        <dbReference type="UniProtKB" id="Q06830"/>
    </source>
</evidence>
<evidence type="ECO:0000250" key="2">
    <source>
        <dbReference type="UniProtKB" id="Q96291"/>
    </source>
</evidence>
<evidence type="ECO:0000255" key="3">
    <source>
        <dbReference type="PROSITE-ProRule" id="PRU00691"/>
    </source>
</evidence>
<evidence type="ECO:0000269" key="4">
    <source>
    </source>
</evidence>
<evidence type="ECO:0000269" key="5">
    <source ref="1"/>
</evidence>
<evidence type="ECO:0000303" key="6">
    <source>
    </source>
</evidence>
<evidence type="ECO:0000303" key="7">
    <source ref="3"/>
</evidence>
<evidence type="ECO:0000305" key="8"/>
<evidence type="ECO:0000312" key="9">
    <source>
        <dbReference type="EMBL" id="BBB37582.1"/>
    </source>
</evidence>
<proteinExistence type="evidence at protein level"/>
<geneLocation type="chloroplast" evidence="9"/>
<feature type="chain" id="PRO_0000450269" description="2-cysteine peroxiredoxin, chloroplastic">
    <location>
        <begin position="1"/>
        <end position="195"/>
    </location>
</feature>
<feature type="domain" description="Thioredoxin" evidence="3">
    <location>
        <begin position="3"/>
        <end position="161"/>
    </location>
</feature>
<feature type="active site" description="Cysteine sulfenic acid (-SOH) intermediate" evidence="8">
    <location>
        <position position="49"/>
    </location>
</feature>
<feature type="disulfide bond" description="Interchain (with C-173); in linked form" evidence="1">
    <location>
        <position position="49"/>
    </location>
</feature>
<feature type="disulfide bond" description="Interchain (with C-52); in linked form" evidence="1">
    <location>
        <position position="170"/>
    </location>
</feature>
<dbReference type="EC" id="1.11.1.24" evidence="2"/>
<dbReference type="EMBL" id="LC337661">
    <property type="protein sequence ID" value="BBB37582.1"/>
    <property type="molecule type" value="Genomic_DNA"/>
</dbReference>
<dbReference type="SMR" id="A0A2Z5VKM8"/>
<dbReference type="GO" id="GO:0009507">
    <property type="term" value="C:chloroplast"/>
    <property type="evidence" value="ECO:0007669"/>
    <property type="project" value="UniProtKB-SubCell"/>
</dbReference>
<dbReference type="GO" id="GO:0008379">
    <property type="term" value="F:thioredoxin peroxidase activity"/>
    <property type="evidence" value="ECO:0007669"/>
    <property type="project" value="TreeGrafter"/>
</dbReference>
<dbReference type="GO" id="GO:0045454">
    <property type="term" value="P:cell redox homeostasis"/>
    <property type="evidence" value="ECO:0007669"/>
    <property type="project" value="TreeGrafter"/>
</dbReference>
<dbReference type="GO" id="GO:0033554">
    <property type="term" value="P:cellular response to stress"/>
    <property type="evidence" value="ECO:0007669"/>
    <property type="project" value="TreeGrafter"/>
</dbReference>
<dbReference type="GO" id="GO:0042744">
    <property type="term" value="P:hydrogen peroxide catabolic process"/>
    <property type="evidence" value="ECO:0007669"/>
    <property type="project" value="TreeGrafter"/>
</dbReference>
<dbReference type="GO" id="GO:0006979">
    <property type="term" value="P:response to oxidative stress"/>
    <property type="evidence" value="ECO:0007669"/>
    <property type="project" value="TreeGrafter"/>
</dbReference>
<dbReference type="CDD" id="cd03015">
    <property type="entry name" value="PRX_Typ2cys"/>
    <property type="match status" value="1"/>
</dbReference>
<dbReference type="FunFam" id="3.40.30.10:FF:000063">
    <property type="entry name" value="2-Cys peroxiredoxin BAS1, chloroplastic"/>
    <property type="match status" value="1"/>
</dbReference>
<dbReference type="Gene3D" id="3.40.30.10">
    <property type="entry name" value="Glutaredoxin"/>
    <property type="match status" value="1"/>
</dbReference>
<dbReference type="InterPro" id="IPR000866">
    <property type="entry name" value="AhpC/TSA"/>
</dbReference>
<dbReference type="InterPro" id="IPR050217">
    <property type="entry name" value="Peroxiredoxin"/>
</dbReference>
<dbReference type="InterPro" id="IPR024706">
    <property type="entry name" value="Peroxiredoxin_AhpC-typ"/>
</dbReference>
<dbReference type="InterPro" id="IPR019479">
    <property type="entry name" value="Peroxiredoxin_C"/>
</dbReference>
<dbReference type="InterPro" id="IPR036249">
    <property type="entry name" value="Thioredoxin-like_sf"/>
</dbReference>
<dbReference type="InterPro" id="IPR013766">
    <property type="entry name" value="Thioredoxin_domain"/>
</dbReference>
<dbReference type="PANTHER" id="PTHR10681">
    <property type="entry name" value="THIOREDOXIN PEROXIDASE"/>
    <property type="match status" value="1"/>
</dbReference>
<dbReference type="PANTHER" id="PTHR10681:SF128">
    <property type="entry name" value="THIOREDOXIN-DEPENDENT PEROXIDE REDUCTASE, MITOCHONDRIAL"/>
    <property type="match status" value="1"/>
</dbReference>
<dbReference type="Pfam" id="PF10417">
    <property type="entry name" value="1-cysPrx_C"/>
    <property type="match status" value="1"/>
</dbReference>
<dbReference type="Pfam" id="PF00578">
    <property type="entry name" value="AhpC-TSA"/>
    <property type="match status" value="1"/>
</dbReference>
<dbReference type="PIRSF" id="PIRSF000239">
    <property type="entry name" value="AHPC"/>
    <property type="match status" value="1"/>
</dbReference>
<dbReference type="SUPFAM" id="SSF52833">
    <property type="entry name" value="Thioredoxin-like"/>
    <property type="match status" value="1"/>
</dbReference>
<dbReference type="PROSITE" id="PS51352">
    <property type="entry name" value="THIOREDOXIN_2"/>
    <property type="match status" value="1"/>
</dbReference>